<gene>
    <name evidence="1" type="primary">trmFO</name>
    <name type="synonym">gid</name>
    <name type="ordered locus">BSUIS_A0933</name>
</gene>
<feature type="chain" id="PRO_1000084285" description="Methylenetetrahydrofolate--tRNA-(uracil-5-)-methyltransferase TrmFO">
    <location>
        <begin position="1"/>
        <end position="466"/>
    </location>
</feature>
<feature type="binding site" evidence="1">
    <location>
        <begin position="14"/>
        <end position="19"/>
    </location>
    <ligand>
        <name>FAD</name>
        <dbReference type="ChEBI" id="CHEBI:57692"/>
    </ligand>
</feature>
<accession>B0CLM0</accession>
<dbReference type="EC" id="2.1.1.74" evidence="1"/>
<dbReference type="EMBL" id="CP000911">
    <property type="protein sequence ID" value="ABY38000.1"/>
    <property type="molecule type" value="Genomic_DNA"/>
</dbReference>
<dbReference type="RefSeq" id="WP_006072619.1">
    <property type="nucleotide sequence ID" value="NC_010169.1"/>
</dbReference>
<dbReference type="SMR" id="B0CLM0"/>
<dbReference type="KEGG" id="bmt:BSUIS_A0933"/>
<dbReference type="HOGENOM" id="CLU_033057_1_0_5"/>
<dbReference type="Proteomes" id="UP000008545">
    <property type="component" value="Chromosome I"/>
</dbReference>
<dbReference type="GO" id="GO:0005829">
    <property type="term" value="C:cytosol"/>
    <property type="evidence" value="ECO:0007669"/>
    <property type="project" value="TreeGrafter"/>
</dbReference>
<dbReference type="GO" id="GO:0050660">
    <property type="term" value="F:flavin adenine dinucleotide binding"/>
    <property type="evidence" value="ECO:0007669"/>
    <property type="project" value="UniProtKB-UniRule"/>
</dbReference>
<dbReference type="GO" id="GO:0047151">
    <property type="term" value="F:tRNA (uracil(54)-C5)-methyltransferase activity, 5,10-methylenetetrahydrofolate-dependent"/>
    <property type="evidence" value="ECO:0007669"/>
    <property type="project" value="UniProtKB-UniRule"/>
</dbReference>
<dbReference type="GO" id="GO:0030488">
    <property type="term" value="P:tRNA methylation"/>
    <property type="evidence" value="ECO:0007669"/>
    <property type="project" value="TreeGrafter"/>
</dbReference>
<dbReference type="GO" id="GO:0002098">
    <property type="term" value="P:tRNA wobble uridine modification"/>
    <property type="evidence" value="ECO:0007669"/>
    <property type="project" value="TreeGrafter"/>
</dbReference>
<dbReference type="Gene3D" id="3.50.50.60">
    <property type="entry name" value="FAD/NAD(P)-binding domain"/>
    <property type="match status" value="2"/>
</dbReference>
<dbReference type="HAMAP" id="MF_01037">
    <property type="entry name" value="TrmFO"/>
    <property type="match status" value="1"/>
</dbReference>
<dbReference type="InterPro" id="IPR036188">
    <property type="entry name" value="FAD/NAD-bd_sf"/>
</dbReference>
<dbReference type="InterPro" id="IPR002218">
    <property type="entry name" value="MnmG-rel"/>
</dbReference>
<dbReference type="InterPro" id="IPR020595">
    <property type="entry name" value="MnmG-rel_CS"/>
</dbReference>
<dbReference type="InterPro" id="IPR040131">
    <property type="entry name" value="MnmG_N"/>
</dbReference>
<dbReference type="InterPro" id="IPR004417">
    <property type="entry name" value="TrmFO"/>
</dbReference>
<dbReference type="NCBIfam" id="TIGR00137">
    <property type="entry name" value="gid_trmFO"/>
    <property type="match status" value="1"/>
</dbReference>
<dbReference type="NCBIfam" id="NF003739">
    <property type="entry name" value="PRK05335.1"/>
    <property type="match status" value="1"/>
</dbReference>
<dbReference type="PANTHER" id="PTHR11806">
    <property type="entry name" value="GLUCOSE INHIBITED DIVISION PROTEIN A"/>
    <property type="match status" value="1"/>
</dbReference>
<dbReference type="PANTHER" id="PTHR11806:SF2">
    <property type="entry name" value="METHYLENETETRAHYDROFOLATE--TRNA-(URACIL-5-)-METHYLTRANSFERASE TRMFO"/>
    <property type="match status" value="1"/>
</dbReference>
<dbReference type="Pfam" id="PF01134">
    <property type="entry name" value="GIDA"/>
    <property type="match status" value="1"/>
</dbReference>
<dbReference type="SUPFAM" id="SSF51905">
    <property type="entry name" value="FAD/NAD(P)-binding domain"/>
    <property type="match status" value="1"/>
</dbReference>
<dbReference type="PROSITE" id="PS01281">
    <property type="entry name" value="GIDA_2"/>
    <property type="match status" value="1"/>
</dbReference>
<comment type="function">
    <text evidence="1">Catalyzes the folate-dependent formation of 5-methyl-uridine at position 54 (M-5-U54) in all tRNAs.</text>
</comment>
<comment type="catalytic activity">
    <reaction evidence="1">
        <text>uridine(54) in tRNA + (6R)-5,10-methylene-5,6,7,8-tetrahydrofolate + NADH + H(+) = 5-methyluridine(54) in tRNA + (6S)-5,6,7,8-tetrahydrofolate + NAD(+)</text>
        <dbReference type="Rhea" id="RHEA:16873"/>
        <dbReference type="Rhea" id="RHEA-COMP:10167"/>
        <dbReference type="Rhea" id="RHEA-COMP:10193"/>
        <dbReference type="ChEBI" id="CHEBI:15378"/>
        <dbReference type="ChEBI" id="CHEBI:15636"/>
        <dbReference type="ChEBI" id="CHEBI:57453"/>
        <dbReference type="ChEBI" id="CHEBI:57540"/>
        <dbReference type="ChEBI" id="CHEBI:57945"/>
        <dbReference type="ChEBI" id="CHEBI:65315"/>
        <dbReference type="ChEBI" id="CHEBI:74447"/>
        <dbReference type="EC" id="2.1.1.74"/>
    </reaction>
</comment>
<comment type="catalytic activity">
    <reaction evidence="1">
        <text>uridine(54) in tRNA + (6R)-5,10-methylene-5,6,7,8-tetrahydrofolate + NADPH + H(+) = 5-methyluridine(54) in tRNA + (6S)-5,6,7,8-tetrahydrofolate + NADP(+)</text>
        <dbReference type="Rhea" id="RHEA:62372"/>
        <dbReference type="Rhea" id="RHEA-COMP:10167"/>
        <dbReference type="Rhea" id="RHEA-COMP:10193"/>
        <dbReference type="ChEBI" id="CHEBI:15378"/>
        <dbReference type="ChEBI" id="CHEBI:15636"/>
        <dbReference type="ChEBI" id="CHEBI:57453"/>
        <dbReference type="ChEBI" id="CHEBI:57783"/>
        <dbReference type="ChEBI" id="CHEBI:58349"/>
        <dbReference type="ChEBI" id="CHEBI:65315"/>
        <dbReference type="ChEBI" id="CHEBI:74447"/>
        <dbReference type="EC" id="2.1.1.74"/>
    </reaction>
</comment>
<comment type="cofactor">
    <cofactor evidence="1">
        <name>FAD</name>
        <dbReference type="ChEBI" id="CHEBI:57692"/>
    </cofactor>
</comment>
<comment type="subcellular location">
    <subcellularLocation>
        <location evidence="1">Cytoplasm</location>
    </subcellularLocation>
</comment>
<comment type="similarity">
    <text evidence="1">Belongs to the MnmG family. TrmFO subfamily.</text>
</comment>
<name>TRMFO_BRUSI</name>
<sequence length="466" mass="50189">MSNNTDLSPVHVIGGGLAGSEAAWQIAQAGVPVVLHEMRPVRGTDAHKTEQLAELVCSNSFRSDDAETNAVGVLHAEMRLAGSLIMACADAHQVPAGGALAVDREGFSQAVTARLEAHPLITIEREEITGLPPTEWGTTIIATGPLTAPSLAEAIAAETDADALAFFDAIAPIIHFDSINMDVCWFQSRYDKVGPGGTGKDYINCPMDKEQYEAFVAALIEGDKTDFKEWEGTPYFDGCLPIEVMAERGPETLRHGPMKPMGLTNAHNPTVKPYAVVQLRQENALGTLYNMVGFQTKLKYGSQTGIFKMIPGLENAEFARLGGLHRNTYLNSPVLLDNVLRLKSRQTLRFAGQVTGCEGYVESSAIGLLAGRFTAAEKLSQAAVPPPPTTAFGALLGHITGGHIVTDDEPGKRSFQPMNVNFGLFPPVDVPKPEGKRLRGKEKTIAKKRALSARALADCRNWLSLY</sequence>
<proteinExistence type="inferred from homology"/>
<evidence type="ECO:0000255" key="1">
    <source>
        <dbReference type="HAMAP-Rule" id="MF_01037"/>
    </source>
</evidence>
<protein>
    <recommendedName>
        <fullName evidence="1">Methylenetetrahydrofolate--tRNA-(uracil-5-)-methyltransferase TrmFO</fullName>
        <ecNumber evidence="1">2.1.1.74</ecNumber>
    </recommendedName>
    <alternativeName>
        <fullName evidence="1">Folate-dependent tRNA (uracil-5-)-methyltransferase</fullName>
    </alternativeName>
    <alternativeName>
        <fullName evidence="1">Folate-dependent tRNA(M-5-U54)-methyltransferase</fullName>
    </alternativeName>
</protein>
<organism>
    <name type="scientific">Brucella suis (strain ATCC 23445 / NCTC 10510)</name>
    <dbReference type="NCBI Taxonomy" id="470137"/>
    <lineage>
        <taxon>Bacteria</taxon>
        <taxon>Pseudomonadati</taxon>
        <taxon>Pseudomonadota</taxon>
        <taxon>Alphaproteobacteria</taxon>
        <taxon>Hyphomicrobiales</taxon>
        <taxon>Brucellaceae</taxon>
        <taxon>Brucella/Ochrobactrum group</taxon>
        <taxon>Brucella</taxon>
    </lineage>
</organism>
<reference key="1">
    <citation type="submission" date="2007-12" db="EMBL/GenBank/DDBJ databases">
        <title>Brucella suis ATCC 23445 whole genome shotgun sequencing project.</title>
        <authorList>
            <person name="Setubal J.C."/>
            <person name="Bowns C."/>
            <person name="Boyle S."/>
            <person name="Crasta O.R."/>
            <person name="Czar M.J."/>
            <person name="Dharmanolla C."/>
            <person name="Gillespie J.J."/>
            <person name="Kenyon R.W."/>
            <person name="Lu J."/>
            <person name="Mane S."/>
            <person name="Mohapatra S."/>
            <person name="Nagrani S."/>
            <person name="Purkayastha A."/>
            <person name="Rajasimha H.K."/>
            <person name="Shallom J.M."/>
            <person name="Shallom S."/>
            <person name="Shukla M."/>
            <person name="Snyder E.E."/>
            <person name="Sobral B.W."/>
            <person name="Wattam A.R."/>
            <person name="Will R."/>
            <person name="Williams K."/>
            <person name="Yoo H."/>
            <person name="Bruce D."/>
            <person name="Detter C."/>
            <person name="Munk C."/>
            <person name="Brettin T.S."/>
        </authorList>
    </citation>
    <scope>NUCLEOTIDE SEQUENCE [LARGE SCALE GENOMIC DNA]</scope>
    <source>
        <strain>ATCC 23445 / NCTC 10510</strain>
    </source>
</reference>
<keyword id="KW-0963">Cytoplasm</keyword>
<keyword id="KW-0274">FAD</keyword>
<keyword id="KW-0285">Flavoprotein</keyword>
<keyword id="KW-0489">Methyltransferase</keyword>
<keyword id="KW-0520">NAD</keyword>
<keyword id="KW-0521">NADP</keyword>
<keyword id="KW-0808">Transferase</keyword>
<keyword id="KW-0819">tRNA processing</keyword>